<proteinExistence type="inferred from homology"/>
<reference key="1">
    <citation type="submission" date="2009-01" db="EMBL/GenBank/DDBJ databases">
        <title>Complete sequence of Clostridium cellulolyticum H10.</title>
        <authorList>
            <consortium name="US DOE Joint Genome Institute"/>
            <person name="Lucas S."/>
            <person name="Copeland A."/>
            <person name="Lapidus A."/>
            <person name="Glavina del Rio T."/>
            <person name="Dalin E."/>
            <person name="Tice H."/>
            <person name="Bruce D."/>
            <person name="Goodwin L."/>
            <person name="Pitluck S."/>
            <person name="Chertkov O."/>
            <person name="Saunders E."/>
            <person name="Brettin T."/>
            <person name="Detter J.C."/>
            <person name="Han C."/>
            <person name="Larimer F."/>
            <person name="Land M."/>
            <person name="Hauser L."/>
            <person name="Kyrpides N."/>
            <person name="Ivanova N."/>
            <person name="Zhou J."/>
            <person name="Richardson P."/>
        </authorList>
    </citation>
    <scope>NUCLEOTIDE SEQUENCE [LARGE SCALE GENOMIC DNA]</scope>
    <source>
        <strain>ATCC 35319 / DSM 5812 / JCM 6584 / H10</strain>
    </source>
</reference>
<accession>B8I736</accession>
<organism>
    <name type="scientific">Ruminiclostridium cellulolyticum (strain ATCC 35319 / DSM 5812 / JCM 6584 / H10)</name>
    <name type="common">Clostridium cellulolyticum</name>
    <dbReference type="NCBI Taxonomy" id="394503"/>
    <lineage>
        <taxon>Bacteria</taxon>
        <taxon>Bacillati</taxon>
        <taxon>Bacillota</taxon>
        <taxon>Clostridia</taxon>
        <taxon>Eubacteriales</taxon>
        <taxon>Oscillospiraceae</taxon>
        <taxon>Ruminiclostridium</taxon>
    </lineage>
</organism>
<feature type="chain" id="PRO_1000133772" description="GTPase Era">
    <location>
        <begin position="1"/>
        <end position="298"/>
    </location>
</feature>
<feature type="domain" description="Era-type G" evidence="2">
    <location>
        <begin position="4"/>
        <end position="171"/>
    </location>
</feature>
<feature type="domain" description="KH type-2" evidence="1">
    <location>
        <begin position="202"/>
        <end position="279"/>
    </location>
</feature>
<feature type="region of interest" description="G1" evidence="2">
    <location>
        <begin position="12"/>
        <end position="19"/>
    </location>
</feature>
<feature type="region of interest" description="G2" evidence="2">
    <location>
        <begin position="38"/>
        <end position="42"/>
    </location>
</feature>
<feature type="region of interest" description="G3" evidence="2">
    <location>
        <begin position="59"/>
        <end position="62"/>
    </location>
</feature>
<feature type="region of interest" description="G4" evidence="2">
    <location>
        <begin position="121"/>
        <end position="124"/>
    </location>
</feature>
<feature type="region of interest" description="G5" evidence="2">
    <location>
        <begin position="150"/>
        <end position="152"/>
    </location>
</feature>
<feature type="binding site" evidence="1">
    <location>
        <begin position="12"/>
        <end position="19"/>
    </location>
    <ligand>
        <name>GTP</name>
        <dbReference type="ChEBI" id="CHEBI:37565"/>
    </ligand>
</feature>
<feature type="binding site" evidence="1">
    <location>
        <begin position="59"/>
        <end position="63"/>
    </location>
    <ligand>
        <name>GTP</name>
        <dbReference type="ChEBI" id="CHEBI:37565"/>
    </ligand>
</feature>
<feature type="binding site" evidence="1">
    <location>
        <begin position="121"/>
        <end position="124"/>
    </location>
    <ligand>
        <name>GTP</name>
        <dbReference type="ChEBI" id="CHEBI:37565"/>
    </ligand>
</feature>
<sequence>MSYKSGFVSVIGRPNVGKSTLLNTITGQKIAIMSNKPQTTRNTIRGVITNKECQLILIDTPGIHKPKTKLGEYMVNVASETIKEVDLILFLVEANTQPGAQDVNIIQQLKQIKTPVFLILNKVDLISKDKLLAIIDSYSKLMDFKAIIPISALKNDGIDLILKEALDYIPEGPQFFSEDMLTDQPEKVIAAEMIREKVLLNLDDEVPHGVGVEVTSFKEREDGLINIQATIYCEKSSHKGIIIGKQGNMLKKIGSAARYEIERLLDTKIFLELWVKVKPDWRNSDNMLKTLGYKTNKN</sequence>
<evidence type="ECO:0000255" key="1">
    <source>
        <dbReference type="HAMAP-Rule" id="MF_00367"/>
    </source>
</evidence>
<evidence type="ECO:0000255" key="2">
    <source>
        <dbReference type="PROSITE-ProRule" id="PRU01050"/>
    </source>
</evidence>
<dbReference type="EMBL" id="CP001348">
    <property type="protein sequence ID" value="ACL74960.1"/>
    <property type="molecule type" value="Genomic_DNA"/>
</dbReference>
<dbReference type="RefSeq" id="WP_015924132.1">
    <property type="nucleotide sequence ID" value="NC_011898.1"/>
</dbReference>
<dbReference type="SMR" id="B8I736"/>
<dbReference type="STRING" id="394503.Ccel_0579"/>
<dbReference type="KEGG" id="cce:Ccel_0579"/>
<dbReference type="eggNOG" id="COG1159">
    <property type="taxonomic scope" value="Bacteria"/>
</dbReference>
<dbReference type="HOGENOM" id="CLU_038009_1_0_9"/>
<dbReference type="OrthoDB" id="9805918at2"/>
<dbReference type="Proteomes" id="UP000001349">
    <property type="component" value="Chromosome"/>
</dbReference>
<dbReference type="GO" id="GO:0005829">
    <property type="term" value="C:cytosol"/>
    <property type="evidence" value="ECO:0007669"/>
    <property type="project" value="TreeGrafter"/>
</dbReference>
<dbReference type="GO" id="GO:0005886">
    <property type="term" value="C:plasma membrane"/>
    <property type="evidence" value="ECO:0007669"/>
    <property type="project" value="UniProtKB-SubCell"/>
</dbReference>
<dbReference type="GO" id="GO:0005525">
    <property type="term" value="F:GTP binding"/>
    <property type="evidence" value="ECO:0007669"/>
    <property type="project" value="UniProtKB-UniRule"/>
</dbReference>
<dbReference type="GO" id="GO:0003924">
    <property type="term" value="F:GTPase activity"/>
    <property type="evidence" value="ECO:0007669"/>
    <property type="project" value="UniProtKB-UniRule"/>
</dbReference>
<dbReference type="GO" id="GO:0043024">
    <property type="term" value="F:ribosomal small subunit binding"/>
    <property type="evidence" value="ECO:0007669"/>
    <property type="project" value="TreeGrafter"/>
</dbReference>
<dbReference type="GO" id="GO:0070181">
    <property type="term" value="F:small ribosomal subunit rRNA binding"/>
    <property type="evidence" value="ECO:0007669"/>
    <property type="project" value="UniProtKB-UniRule"/>
</dbReference>
<dbReference type="GO" id="GO:0000028">
    <property type="term" value="P:ribosomal small subunit assembly"/>
    <property type="evidence" value="ECO:0007669"/>
    <property type="project" value="TreeGrafter"/>
</dbReference>
<dbReference type="CDD" id="cd04163">
    <property type="entry name" value="Era"/>
    <property type="match status" value="1"/>
</dbReference>
<dbReference type="CDD" id="cd22534">
    <property type="entry name" value="KH-II_Era"/>
    <property type="match status" value="1"/>
</dbReference>
<dbReference type="FunFam" id="3.30.300.20:FF:000003">
    <property type="entry name" value="GTPase Era"/>
    <property type="match status" value="1"/>
</dbReference>
<dbReference type="FunFam" id="3.40.50.300:FF:000094">
    <property type="entry name" value="GTPase Era"/>
    <property type="match status" value="1"/>
</dbReference>
<dbReference type="Gene3D" id="3.30.300.20">
    <property type="match status" value="1"/>
</dbReference>
<dbReference type="Gene3D" id="3.40.50.300">
    <property type="entry name" value="P-loop containing nucleotide triphosphate hydrolases"/>
    <property type="match status" value="1"/>
</dbReference>
<dbReference type="HAMAP" id="MF_00367">
    <property type="entry name" value="GTPase_Era"/>
    <property type="match status" value="1"/>
</dbReference>
<dbReference type="InterPro" id="IPR030388">
    <property type="entry name" value="G_ERA_dom"/>
</dbReference>
<dbReference type="InterPro" id="IPR006073">
    <property type="entry name" value="GTP-bd"/>
</dbReference>
<dbReference type="InterPro" id="IPR005662">
    <property type="entry name" value="GTPase_Era-like"/>
</dbReference>
<dbReference type="InterPro" id="IPR015946">
    <property type="entry name" value="KH_dom-like_a/b"/>
</dbReference>
<dbReference type="InterPro" id="IPR004044">
    <property type="entry name" value="KH_dom_type_2"/>
</dbReference>
<dbReference type="InterPro" id="IPR009019">
    <property type="entry name" value="KH_sf_prok-type"/>
</dbReference>
<dbReference type="InterPro" id="IPR027417">
    <property type="entry name" value="P-loop_NTPase"/>
</dbReference>
<dbReference type="InterPro" id="IPR005225">
    <property type="entry name" value="Small_GTP-bd"/>
</dbReference>
<dbReference type="NCBIfam" id="TIGR00436">
    <property type="entry name" value="era"/>
    <property type="match status" value="1"/>
</dbReference>
<dbReference type="NCBIfam" id="NF000908">
    <property type="entry name" value="PRK00089.1"/>
    <property type="match status" value="1"/>
</dbReference>
<dbReference type="NCBIfam" id="TIGR00231">
    <property type="entry name" value="small_GTP"/>
    <property type="match status" value="1"/>
</dbReference>
<dbReference type="PANTHER" id="PTHR42698">
    <property type="entry name" value="GTPASE ERA"/>
    <property type="match status" value="1"/>
</dbReference>
<dbReference type="PANTHER" id="PTHR42698:SF1">
    <property type="entry name" value="GTPASE ERA, MITOCHONDRIAL"/>
    <property type="match status" value="1"/>
</dbReference>
<dbReference type="Pfam" id="PF07650">
    <property type="entry name" value="KH_2"/>
    <property type="match status" value="1"/>
</dbReference>
<dbReference type="Pfam" id="PF01926">
    <property type="entry name" value="MMR_HSR1"/>
    <property type="match status" value="1"/>
</dbReference>
<dbReference type="PRINTS" id="PR00326">
    <property type="entry name" value="GTP1OBG"/>
</dbReference>
<dbReference type="SUPFAM" id="SSF52540">
    <property type="entry name" value="P-loop containing nucleoside triphosphate hydrolases"/>
    <property type="match status" value="1"/>
</dbReference>
<dbReference type="SUPFAM" id="SSF54814">
    <property type="entry name" value="Prokaryotic type KH domain (KH-domain type II)"/>
    <property type="match status" value="1"/>
</dbReference>
<dbReference type="PROSITE" id="PS51713">
    <property type="entry name" value="G_ERA"/>
    <property type="match status" value="1"/>
</dbReference>
<dbReference type="PROSITE" id="PS50823">
    <property type="entry name" value="KH_TYPE_2"/>
    <property type="match status" value="1"/>
</dbReference>
<keyword id="KW-1003">Cell membrane</keyword>
<keyword id="KW-0963">Cytoplasm</keyword>
<keyword id="KW-0342">GTP-binding</keyword>
<keyword id="KW-0472">Membrane</keyword>
<keyword id="KW-0547">Nucleotide-binding</keyword>
<keyword id="KW-1185">Reference proteome</keyword>
<keyword id="KW-0690">Ribosome biogenesis</keyword>
<keyword id="KW-0694">RNA-binding</keyword>
<keyword id="KW-0699">rRNA-binding</keyword>
<name>ERA_RUMCH</name>
<gene>
    <name evidence="1" type="primary">era</name>
    <name type="ordered locus">Ccel_0579</name>
</gene>
<comment type="function">
    <text evidence="1">An essential GTPase that binds both GDP and GTP, with rapid nucleotide exchange. Plays a role in 16S rRNA processing and 30S ribosomal subunit biogenesis and possibly also in cell cycle regulation and energy metabolism.</text>
</comment>
<comment type="subunit">
    <text evidence="1">Monomer.</text>
</comment>
<comment type="subcellular location">
    <subcellularLocation>
        <location>Cytoplasm</location>
    </subcellularLocation>
    <subcellularLocation>
        <location evidence="1">Cell membrane</location>
        <topology evidence="1">Peripheral membrane protein</topology>
    </subcellularLocation>
</comment>
<comment type="similarity">
    <text evidence="1 2">Belongs to the TRAFAC class TrmE-Era-EngA-EngB-Septin-like GTPase superfamily. Era GTPase family.</text>
</comment>
<protein>
    <recommendedName>
        <fullName evidence="1">GTPase Era</fullName>
    </recommendedName>
</protein>